<keyword id="KW-1003">Cell membrane</keyword>
<keyword id="KW-0472">Membrane</keyword>
<keyword id="KW-1185">Reference proteome</keyword>
<keyword id="KW-1278">Translocase</keyword>
<keyword id="KW-0812">Transmembrane</keyword>
<keyword id="KW-1133">Transmembrane helix</keyword>
<feature type="chain" id="PRO_0000183902" description="Cytochrome c oxidase subunit 4B">
    <location>
        <begin position="1"/>
        <end position="110"/>
    </location>
</feature>
<feature type="transmembrane region" description="Helical" evidence="1">
    <location>
        <begin position="27"/>
        <end position="47"/>
    </location>
</feature>
<feature type="transmembrane region" description="Helical" evidence="1">
    <location>
        <begin position="50"/>
        <end position="70"/>
    </location>
</feature>
<feature type="transmembrane region" description="Helical" evidence="1">
    <location>
        <begin position="88"/>
        <end position="108"/>
    </location>
</feature>
<sequence length="110" mass="12620">MVDKKSRGHINSDLEFKKKKHAREMKYQVLSFGLMIGLTIVAFLTVATDGVGSWFTIPFIILLAAIQVIFQLYYFMHMNQKGHEAPALFLYSGVFVAFITVLAFVTIIWW</sequence>
<comment type="catalytic activity">
    <reaction>
        <text>4 Fe(II)-[cytochrome c] + O2 + 8 H(+)(in) = 4 Fe(III)-[cytochrome c] + 2 H2O + 4 H(+)(out)</text>
        <dbReference type="Rhea" id="RHEA:11436"/>
        <dbReference type="Rhea" id="RHEA-COMP:10350"/>
        <dbReference type="Rhea" id="RHEA-COMP:14399"/>
        <dbReference type="ChEBI" id="CHEBI:15377"/>
        <dbReference type="ChEBI" id="CHEBI:15378"/>
        <dbReference type="ChEBI" id="CHEBI:15379"/>
        <dbReference type="ChEBI" id="CHEBI:29033"/>
        <dbReference type="ChEBI" id="CHEBI:29034"/>
        <dbReference type="EC" id="7.1.1.9"/>
    </reaction>
</comment>
<comment type="subcellular location">
    <subcellularLocation>
        <location>Cell membrane</location>
        <topology>Multi-pass membrane protein</topology>
    </subcellularLocation>
</comment>
<comment type="similarity">
    <text evidence="2">Belongs to the cytochrome c oxidase bacterial subunit 4 family.</text>
</comment>
<accession>P24013</accession>
<organism>
    <name type="scientific">Bacillus subtilis (strain 168)</name>
    <dbReference type="NCBI Taxonomy" id="224308"/>
    <lineage>
        <taxon>Bacteria</taxon>
        <taxon>Bacillati</taxon>
        <taxon>Bacillota</taxon>
        <taxon>Bacilli</taxon>
        <taxon>Bacillales</taxon>
        <taxon>Bacillaceae</taxon>
        <taxon>Bacillus</taxon>
    </lineage>
</organism>
<proteinExistence type="inferred from homology"/>
<evidence type="ECO:0000255" key="1"/>
<evidence type="ECO:0000305" key="2"/>
<gene>
    <name type="primary">ctaF</name>
    <name type="ordered locus">BSU14920</name>
</gene>
<reference key="1">
    <citation type="journal article" date="1991" name="Eur. J. Biochem.">
        <title>The Bacillus subtilis cytochrome-c oxidase. Variations on a conserved protein theme.</title>
        <authorList>
            <person name="Saraste M."/>
            <person name="Metso T."/>
            <person name="Nakari T."/>
            <person name="Jalli T."/>
            <person name="Lauraeus M."/>
            <person name="van der Oost J."/>
        </authorList>
    </citation>
    <scope>NUCLEOTIDE SEQUENCE [GENOMIC DNA]</scope>
    <source>
        <strain>168</strain>
    </source>
</reference>
<reference key="2">
    <citation type="submission" date="1997-08" db="EMBL/GenBank/DDBJ databases">
        <title>Bacillus subtilis chromosomal region downstream nprE.</title>
        <authorList>
            <person name="Bertero M."/>
            <person name="Presecan E."/>
            <person name="Glaser P."/>
            <person name="Richou A."/>
            <person name="Danchin A."/>
        </authorList>
    </citation>
    <scope>NUCLEOTIDE SEQUENCE [GENOMIC DNA]</scope>
    <source>
        <strain>168</strain>
    </source>
</reference>
<reference key="3">
    <citation type="journal article" date="1997" name="Nature">
        <title>The complete genome sequence of the Gram-positive bacterium Bacillus subtilis.</title>
        <authorList>
            <person name="Kunst F."/>
            <person name="Ogasawara N."/>
            <person name="Moszer I."/>
            <person name="Albertini A.M."/>
            <person name="Alloni G."/>
            <person name="Azevedo V."/>
            <person name="Bertero M.G."/>
            <person name="Bessieres P."/>
            <person name="Bolotin A."/>
            <person name="Borchert S."/>
            <person name="Borriss R."/>
            <person name="Boursier L."/>
            <person name="Brans A."/>
            <person name="Braun M."/>
            <person name="Brignell S.C."/>
            <person name="Bron S."/>
            <person name="Brouillet S."/>
            <person name="Bruschi C.V."/>
            <person name="Caldwell B."/>
            <person name="Capuano V."/>
            <person name="Carter N.M."/>
            <person name="Choi S.-K."/>
            <person name="Codani J.-J."/>
            <person name="Connerton I.F."/>
            <person name="Cummings N.J."/>
            <person name="Daniel R.A."/>
            <person name="Denizot F."/>
            <person name="Devine K.M."/>
            <person name="Duesterhoeft A."/>
            <person name="Ehrlich S.D."/>
            <person name="Emmerson P.T."/>
            <person name="Entian K.-D."/>
            <person name="Errington J."/>
            <person name="Fabret C."/>
            <person name="Ferrari E."/>
            <person name="Foulger D."/>
            <person name="Fritz C."/>
            <person name="Fujita M."/>
            <person name="Fujita Y."/>
            <person name="Fuma S."/>
            <person name="Galizzi A."/>
            <person name="Galleron N."/>
            <person name="Ghim S.-Y."/>
            <person name="Glaser P."/>
            <person name="Goffeau A."/>
            <person name="Golightly E.J."/>
            <person name="Grandi G."/>
            <person name="Guiseppi G."/>
            <person name="Guy B.J."/>
            <person name="Haga K."/>
            <person name="Haiech J."/>
            <person name="Harwood C.R."/>
            <person name="Henaut A."/>
            <person name="Hilbert H."/>
            <person name="Holsappel S."/>
            <person name="Hosono S."/>
            <person name="Hullo M.-F."/>
            <person name="Itaya M."/>
            <person name="Jones L.-M."/>
            <person name="Joris B."/>
            <person name="Karamata D."/>
            <person name="Kasahara Y."/>
            <person name="Klaerr-Blanchard M."/>
            <person name="Klein C."/>
            <person name="Kobayashi Y."/>
            <person name="Koetter P."/>
            <person name="Koningstein G."/>
            <person name="Krogh S."/>
            <person name="Kumano M."/>
            <person name="Kurita K."/>
            <person name="Lapidus A."/>
            <person name="Lardinois S."/>
            <person name="Lauber J."/>
            <person name="Lazarevic V."/>
            <person name="Lee S.-M."/>
            <person name="Levine A."/>
            <person name="Liu H."/>
            <person name="Masuda S."/>
            <person name="Mauel C."/>
            <person name="Medigue C."/>
            <person name="Medina N."/>
            <person name="Mellado R.P."/>
            <person name="Mizuno M."/>
            <person name="Moestl D."/>
            <person name="Nakai S."/>
            <person name="Noback M."/>
            <person name="Noone D."/>
            <person name="O'Reilly M."/>
            <person name="Ogawa K."/>
            <person name="Ogiwara A."/>
            <person name="Oudega B."/>
            <person name="Park S.-H."/>
            <person name="Parro V."/>
            <person name="Pohl T.M."/>
            <person name="Portetelle D."/>
            <person name="Porwollik S."/>
            <person name="Prescott A.M."/>
            <person name="Presecan E."/>
            <person name="Pujic P."/>
            <person name="Purnelle B."/>
            <person name="Rapoport G."/>
            <person name="Rey M."/>
            <person name="Reynolds S."/>
            <person name="Rieger M."/>
            <person name="Rivolta C."/>
            <person name="Rocha E."/>
            <person name="Roche B."/>
            <person name="Rose M."/>
            <person name="Sadaie Y."/>
            <person name="Sato T."/>
            <person name="Scanlan E."/>
            <person name="Schleich S."/>
            <person name="Schroeter R."/>
            <person name="Scoffone F."/>
            <person name="Sekiguchi J."/>
            <person name="Sekowska A."/>
            <person name="Seror S.J."/>
            <person name="Serror P."/>
            <person name="Shin B.-S."/>
            <person name="Soldo B."/>
            <person name="Sorokin A."/>
            <person name="Tacconi E."/>
            <person name="Takagi T."/>
            <person name="Takahashi H."/>
            <person name="Takemaru K."/>
            <person name="Takeuchi M."/>
            <person name="Tamakoshi A."/>
            <person name="Tanaka T."/>
            <person name="Terpstra P."/>
            <person name="Tognoni A."/>
            <person name="Tosato V."/>
            <person name="Uchiyama S."/>
            <person name="Vandenbol M."/>
            <person name="Vannier F."/>
            <person name="Vassarotti A."/>
            <person name="Viari A."/>
            <person name="Wambutt R."/>
            <person name="Wedler E."/>
            <person name="Wedler H."/>
            <person name="Weitzenegger T."/>
            <person name="Winters P."/>
            <person name="Wipat A."/>
            <person name="Yamamoto H."/>
            <person name="Yamane K."/>
            <person name="Yasumoto K."/>
            <person name="Yata K."/>
            <person name="Yoshida K."/>
            <person name="Yoshikawa H.-F."/>
            <person name="Zumstein E."/>
            <person name="Yoshikawa H."/>
            <person name="Danchin A."/>
        </authorList>
    </citation>
    <scope>NUCLEOTIDE SEQUENCE [LARGE SCALE GENOMIC DNA]</scope>
    <source>
        <strain>168</strain>
    </source>
</reference>
<dbReference type="EC" id="7.1.1.9"/>
<dbReference type="EMBL" id="X54140">
    <property type="protein sequence ID" value="CAA38079.1"/>
    <property type="molecule type" value="Genomic_DNA"/>
</dbReference>
<dbReference type="EMBL" id="Z98682">
    <property type="protein sequence ID" value="CAB11345.1"/>
    <property type="molecule type" value="Genomic_DNA"/>
</dbReference>
<dbReference type="EMBL" id="AL009126">
    <property type="protein sequence ID" value="CAB13365.1"/>
    <property type="molecule type" value="Genomic_DNA"/>
</dbReference>
<dbReference type="PIR" id="G69609">
    <property type="entry name" value="G69609"/>
</dbReference>
<dbReference type="RefSeq" id="NP_389375.1">
    <property type="nucleotide sequence ID" value="NC_000964.3"/>
</dbReference>
<dbReference type="RefSeq" id="WP_003232242.1">
    <property type="nucleotide sequence ID" value="NZ_OZ025638.1"/>
</dbReference>
<dbReference type="SMR" id="P24013"/>
<dbReference type="FunCoup" id="P24013">
    <property type="interactions" value="76"/>
</dbReference>
<dbReference type="STRING" id="224308.BSU14920"/>
<dbReference type="TCDB" id="3.D.4.4.1">
    <property type="family name" value="the proton-translocating cytochrome oxidase (cox) superfamily"/>
</dbReference>
<dbReference type="PaxDb" id="224308-BSU14920"/>
<dbReference type="EnsemblBacteria" id="CAB13365">
    <property type="protein sequence ID" value="CAB13365"/>
    <property type="gene ID" value="BSU_14920"/>
</dbReference>
<dbReference type="GeneID" id="936259"/>
<dbReference type="KEGG" id="bsu:BSU14920"/>
<dbReference type="PATRIC" id="fig|224308.179.peg.1627"/>
<dbReference type="eggNOG" id="COG3125">
    <property type="taxonomic scope" value="Bacteria"/>
</dbReference>
<dbReference type="InParanoid" id="P24013"/>
<dbReference type="OrthoDB" id="2989516at2"/>
<dbReference type="BioCyc" id="BSUB:BSU14920-MONOMER"/>
<dbReference type="BioCyc" id="MetaCyc:BSU14920-MONOMER"/>
<dbReference type="SABIO-RK" id="P24013"/>
<dbReference type="Proteomes" id="UP000001570">
    <property type="component" value="Chromosome"/>
</dbReference>
<dbReference type="GO" id="GO:0005886">
    <property type="term" value="C:plasma membrane"/>
    <property type="evidence" value="ECO:0007669"/>
    <property type="project" value="UniProtKB-SubCell"/>
</dbReference>
<dbReference type="GO" id="GO:0004129">
    <property type="term" value="F:cytochrome-c oxidase activity"/>
    <property type="evidence" value="ECO:0007669"/>
    <property type="project" value="UniProtKB-EC"/>
</dbReference>
<dbReference type="InterPro" id="IPR014257">
    <property type="entry name" value="Cyt_c_oxidase_su4_bacillaceae"/>
</dbReference>
<dbReference type="InterPro" id="IPR005171">
    <property type="entry name" value="Cyt_c_oxidase_su4_prok"/>
</dbReference>
<dbReference type="NCBIfam" id="TIGR02908">
    <property type="entry name" value="CoxD_Bacillus"/>
    <property type="match status" value="1"/>
</dbReference>
<dbReference type="Pfam" id="PF03626">
    <property type="entry name" value="COX4_pro"/>
    <property type="match status" value="1"/>
</dbReference>
<protein>
    <recommendedName>
        <fullName>Cytochrome c oxidase subunit 4B</fullName>
        <ecNumber>7.1.1.9</ecNumber>
    </recommendedName>
    <alternativeName>
        <fullName>Caa-3605 subunit 4B</fullName>
    </alternativeName>
    <alternativeName>
        <fullName>Cytochrome aa3 subunit 4B</fullName>
    </alternativeName>
    <alternativeName>
        <fullName>Cytochrome c oxidase polypeptide IVB</fullName>
    </alternativeName>
</protein>
<name>COX4_BACSU</name>